<sequence length="180" mass="20323">MTRLKDKYLNEAAPALIEKFKYSSRMQVPKLEKVVLNMGVGEVKDNPKAMDSAVNDMTLITGQKPIVTKAKKSVAAFKLRQGMNIGCKVTLRGDRMYEFVDKLFNVAIPRVRDFRGLSSNSFDGRGNYSMGIKDQLIFPEIEYDKVDKLRGMDIVFVTTAKSDEEAKELLKLLGMPFSQN</sequence>
<gene>
    <name evidence="1" type="primary">rplE</name>
    <name type="ordered locus">Ccel_0770</name>
</gene>
<feature type="chain" id="PRO_1000166124" description="Large ribosomal subunit protein uL5">
    <location>
        <begin position="1"/>
        <end position="180"/>
    </location>
</feature>
<reference key="1">
    <citation type="submission" date="2009-01" db="EMBL/GenBank/DDBJ databases">
        <title>Complete sequence of Clostridium cellulolyticum H10.</title>
        <authorList>
            <consortium name="US DOE Joint Genome Institute"/>
            <person name="Lucas S."/>
            <person name="Copeland A."/>
            <person name="Lapidus A."/>
            <person name="Glavina del Rio T."/>
            <person name="Dalin E."/>
            <person name="Tice H."/>
            <person name="Bruce D."/>
            <person name="Goodwin L."/>
            <person name="Pitluck S."/>
            <person name="Chertkov O."/>
            <person name="Saunders E."/>
            <person name="Brettin T."/>
            <person name="Detter J.C."/>
            <person name="Han C."/>
            <person name="Larimer F."/>
            <person name="Land M."/>
            <person name="Hauser L."/>
            <person name="Kyrpides N."/>
            <person name="Ivanova N."/>
            <person name="Zhou J."/>
            <person name="Richardson P."/>
        </authorList>
    </citation>
    <scope>NUCLEOTIDE SEQUENCE [LARGE SCALE GENOMIC DNA]</scope>
    <source>
        <strain>ATCC 35319 / DSM 5812 / JCM 6584 / H10</strain>
    </source>
</reference>
<proteinExistence type="inferred from homology"/>
<dbReference type="EMBL" id="CP001348">
    <property type="protein sequence ID" value="ACL75148.1"/>
    <property type="molecule type" value="Genomic_DNA"/>
</dbReference>
<dbReference type="RefSeq" id="WP_015924313.1">
    <property type="nucleotide sequence ID" value="NC_011898.1"/>
</dbReference>
<dbReference type="SMR" id="B8I7Z1"/>
<dbReference type="STRING" id="394503.Ccel_0770"/>
<dbReference type="KEGG" id="cce:Ccel_0770"/>
<dbReference type="eggNOG" id="COG0094">
    <property type="taxonomic scope" value="Bacteria"/>
</dbReference>
<dbReference type="HOGENOM" id="CLU_061015_2_1_9"/>
<dbReference type="OrthoDB" id="9806626at2"/>
<dbReference type="Proteomes" id="UP000001349">
    <property type="component" value="Chromosome"/>
</dbReference>
<dbReference type="GO" id="GO:1990904">
    <property type="term" value="C:ribonucleoprotein complex"/>
    <property type="evidence" value="ECO:0007669"/>
    <property type="project" value="UniProtKB-KW"/>
</dbReference>
<dbReference type="GO" id="GO:0005840">
    <property type="term" value="C:ribosome"/>
    <property type="evidence" value="ECO:0007669"/>
    <property type="project" value="UniProtKB-KW"/>
</dbReference>
<dbReference type="GO" id="GO:0019843">
    <property type="term" value="F:rRNA binding"/>
    <property type="evidence" value="ECO:0007669"/>
    <property type="project" value="UniProtKB-UniRule"/>
</dbReference>
<dbReference type="GO" id="GO:0003735">
    <property type="term" value="F:structural constituent of ribosome"/>
    <property type="evidence" value="ECO:0007669"/>
    <property type="project" value="InterPro"/>
</dbReference>
<dbReference type="GO" id="GO:0000049">
    <property type="term" value="F:tRNA binding"/>
    <property type="evidence" value="ECO:0007669"/>
    <property type="project" value="UniProtKB-UniRule"/>
</dbReference>
<dbReference type="GO" id="GO:0006412">
    <property type="term" value="P:translation"/>
    <property type="evidence" value="ECO:0007669"/>
    <property type="project" value="UniProtKB-UniRule"/>
</dbReference>
<dbReference type="FunFam" id="3.30.1440.10:FF:000001">
    <property type="entry name" value="50S ribosomal protein L5"/>
    <property type="match status" value="1"/>
</dbReference>
<dbReference type="Gene3D" id="3.30.1440.10">
    <property type="match status" value="1"/>
</dbReference>
<dbReference type="HAMAP" id="MF_01333_B">
    <property type="entry name" value="Ribosomal_uL5_B"/>
    <property type="match status" value="1"/>
</dbReference>
<dbReference type="InterPro" id="IPR002132">
    <property type="entry name" value="Ribosomal_uL5"/>
</dbReference>
<dbReference type="InterPro" id="IPR020930">
    <property type="entry name" value="Ribosomal_uL5_bac-type"/>
</dbReference>
<dbReference type="InterPro" id="IPR031309">
    <property type="entry name" value="Ribosomal_uL5_C"/>
</dbReference>
<dbReference type="InterPro" id="IPR020929">
    <property type="entry name" value="Ribosomal_uL5_CS"/>
</dbReference>
<dbReference type="InterPro" id="IPR022803">
    <property type="entry name" value="Ribosomal_uL5_dom_sf"/>
</dbReference>
<dbReference type="InterPro" id="IPR031310">
    <property type="entry name" value="Ribosomal_uL5_N"/>
</dbReference>
<dbReference type="NCBIfam" id="NF000585">
    <property type="entry name" value="PRK00010.1"/>
    <property type="match status" value="1"/>
</dbReference>
<dbReference type="PANTHER" id="PTHR11994">
    <property type="entry name" value="60S RIBOSOMAL PROTEIN L11-RELATED"/>
    <property type="match status" value="1"/>
</dbReference>
<dbReference type="Pfam" id="PF00281">
    <property type="entry name" value="Ribosomal_L5"/>
    <property type="match status" value="1"/>
</dbReference>
<dbReference type="Pfam" id="PF00673">
    <property type="entry name" value="Ribosomal_L5_C"/>
    <property type="match status" value="1"/>
</dbReference>
<dbReference type="PIRSF" id="PIRSF002161">
    <property type="entry name" value="Ribosomal_L5"/>
    <property type="match status" value="1"/>
</dbReference>
<dbReference type="SUPFAM" id="SSF55282">
    <property type="entry name" value="RL5-like"/>
    <property type="match status" value="1"/>
</dbReference>
<dbReference type="PROSITE" id="PS00358">
    <property type="entry name" value="RIBOSOMAL_L5"/>
    <property type="match status" value="1"/>
</dbReference>
<evidence type="ECO:0000255" key="1">
    <source>
        <dbReference type="HAMAP-Rule" id="MF_01333"/>
    </source>
</evidence>
<evidence type="ECO:0000305" key="2"/>
<name>RL5_RUMCH</name>
<accession>B8I7Z1</accession>
<comment type="function">
    <text evidence="1">This is one of the proteins that bind and probably mediate the attachment of the 5S RNA into the large ribosomal subunit, where it forms part of the central protuberance. In the 70S ribosome it contacts protein S13 of the 30S subunit (bridge B1b), connecting the 2 subunits; this bridge is implicated in subunit movement. Contacts the P site tRNA; the 5S rRNA and some of its associated proteins might help stabilize positioning of ribosome-bound tRNAs.</text>
</comment>
<comment type="subunit">
    <text evidence="1">Part of the 50S ribosomal subunit; part of the 5S rRNA/L5/L18/L25 subcomplex. Contacts the 5S rRNA and the P site tRNA. Forms a bridge to the 30S subunit in the 70S ribosome.</text>
</comment>
<comment type="similarity">
    <text evidence="1">Belongs to the universal ribosomal protein uL5 family.</text>
</comment>
<organism>
    <name type="scientific">Ruminiclostridium cellulolyticum (strain ATCC 35319 / DSM 5812 / JCM 6584 / H10)</name>
    <name type="common">Clostridium cellulolyticum</name>
    <dbReference type="NCBI Taxonomy" id="394503"/>
    <lineage>
        <taxon>Bacteria</taxon>
        <taxon>Bacillati</taxon>
        <taxon>Bacillota</taxon>
        <taxon>Clostridia</taxon>
        <taxon>Eubacteriales</taxon>
        <taxon>Oscillospiraceae</taxon>
        <taxon>Ruminiclostridium</taxon>
    </lineage>
</organism>
<protein>
    <recommendedName>
        <fullName evidence="1">Large ribosomal subunit protein uL5</fullName>
    </recommendedName>
    <alternativeName>
        <fullName evidence="2">50S ribosomal protein L5</fullName>
    </alternativeName>
</protein>
<keyword id="KW-1185">Reference proteome</keyword>
<keyword id="KW-0687">Ribonucleoprotein</keyword>
<keyword id="KW-0689">Ribosomal protein</keyword>
<keyword id="KW-0694">RNA-binding</keyword>
<keyword id="KW-0699">rRNA-binding</keyword>
<keyword id="KW-0820">tRNA-binding</keyword>